<evidence type="ECO:0000250" key="1"/>
<evidence type="ECO:0000305" key="2"/>
<reference key="1">
    <citation type="journal article" date="2007" name="Mol. Biol. Evol.">
        <title>Plastid genome sequence of the cryptophyte alga Rhodomonas salina CCMP1319: lateral transfer of putative DNA replication machinery and a test of chromist plastid phylogeny.</title>
        <authorList>
            <person name="Khan H."/>
            <person name="Parks N."/>
            <person name="Kozera C."/>
            <person name="Curtis B.A."/>
            <person name="Parsons B.J."/>
            <person name="Bowman S."/>
            <person name="Archibald J.M."/>
        </authorList>
    </citation>
    <scope>NUCLEOTIDE SEQUENCE [LARGE SCALE GENOMIC DNA]</scope>
    <source>
        <strain>CCMP1319 / NEPCC76 / CS-174</strain>
    </source>
</reference>
<sequence>MHVKQGDTVKILTGKDKGKIGEITKIIKGSNQVVVQDINVKKKHVKPRKEGEIGKILQFEAPIHSSNVMVYNAESQVASRVNYQKDESGKKIRVFKKLLNTN</sequence>
<accession>A6MW12</accession>
<dbReference type="EMBL" id="EF508371">
    <property type="protein sequence ID" value="ABO70775.1"/>
    <property type="molecule type" value="Genomic_DNA"/>
</dbReference>
<dbReference type="RefSeq" id="YP_001293591.1">
    <property type="nucleotide sequence ID" value="NC_009573.1"/>
</dbReference>
<dbReference type="SMR" id="A6MW12"/>
<dbReference type="GeneID" id="5228530"/>
<dbReference type="GO" id="GO:0009507">
    <property type="term" value="C:chloroplast"/>
    <property type="evidence" value="ECO:0007669"/>
    <property type="project" value="UniProtKB-SubCell"/>
</dbReference>
<dbReference type="GO" id="GO:1990904">
    <property type="term" value="C:ribonucleoprotein complex"/>
    <property type="evidence" value="ECO:0007669"/>
    <property type="project" value="UniProtKB-KW"/>
</dbReference>
<dbReference type="GO" id="GO:0005840">
    <property type="term" value="C:ribosome"/>
    <property type="evidence" value="ECO:0007669"/>
    <property type="project" value="UniProtKB-KW"/>
</dbReference>
<dbReference type="GO" id="GO:0019843">
    <property type="term" value="F:rRNA binding"/>
    <property type="evidence" value="ECO:0007669"/>
    <property type="project" value="UniProtKB-UniRule"/>
</dbReference>
<dbReference type="GO" id="GO:0003735">
    <property type="term" value="F:structural constituent of ribosome"/>
    <property type="evidence" value="ECO:0007669"/>
    <property type="project" value="InterPro"/>
</dbReference>
<dbReference type="GO" id="GO:0006412">
    <property type="term" value="P:translation"/>
    <property type="evidence" value="ECO:0007669"/>
    <property type="project" value="UniProtKB-UniRule"/>
</dbReference>
<dbReference type="CDD" id="cd06089">
    <property type="entry name" value="KOW_RPL26"/>
    <property type="match status" value="1"/>
</dbReference>
<dbReference type="Gene3D" id="2.30.30.30">
    <property type="match status" value="1"/>
</dbReference>
<dbReference type="HAMAP" id="MF_01326_B">
    <property type="entry name" value="Ribosomal_uL24_B"/>
    <property type="match status" value="1"/>
</dbReference>
<dbReference type="InterPro" id="IPR005824">
    <property type="entry name" value="KOW"/>
</dbReference>
<dbReference type="InterPro" id="IPR014722">
    <property type="entry name" value="Rib_uL2_dom2"/>
</dbReference>
<dbReference type="InterPro" id="IPR003256">
    <property type="entry name" value="Ribosomal_uL24"/>
</dbReference>
<dbReference type="InterPro" id="IPR005825">
    <property type="entry name" value="Ribosomal_uL24_CS"/>
</dbReference>
<dbReference type="InterPro" id="IPR041988">
    <property type="entry name" value="Ribosomal_uL24_KOW"/>
</dbReference>
<dbReference type="InterPro" id="IPR008991">
    <property type="entry name" value="Translation_prot_SH3-like_sf"/>
</dbReference>
<dbReference type="NCBIfam" id="TIGR01079">
    <property type="entry name" value="rplX_bact"/>
    <property type="match status" value="1"/>
</dbReference>
<dbReference type="PANTHER" id="PTHR12903">
    <property type="entry name" value="MITOCHONDRIAL RIBOSOMAL PROTEIN L24"/>
    <property type="match status" value="1"/>
</dbReference>
<dbReference type="Pfam" id="PF00467">
    <property type="entry name" value="KOW"/>
    <property type="match status" value="1"/>
</dbReference>
<dbReference type="Pfam" id="PF17136">
    <property type="entry name" value="ribosomal_L24"/>
    <property type="match status" value="1"/>
</dbReference>
<dbReference type="SMART" id="SM00739">
    <property type="entry name" value="KOW"/>
    <property type="match status" value="1"/>
</dbReference>
<dbReference type="SUPFAM" id="SSF50104">
    <property type="entry name" value="Translation proteins SH3-like domain"/>
    <property type="match status" value="1"/>
</dbReference>
<dbReference type="PROSITE" id="PS01108">
    <property type="entry name" value="RIBOSOMAL_L24"/>
    <property type="match status" value="1"/>
</dbReference>
<name>RK24_RHDSA</name>
<organism>
    <name type="scientific">Rhodomonas salina</name>
    <name type="common">Cryptomonas salina</name>
    <dbReference type="NCBI Taxonomy" id="52970"/>
    <lineage>
        <taxon>Eukaryota</taxon>
        <taxon>Cryptophyceae</taxon>
        <taxon>Pyrenomonadales</taxon>
        <taxon>Pyrenomonadaceae</taxon>
        <taxon>Rhodomonas</taxon>
    </lineage>
</organism>
<comment type="function">
    <text evidence="1">One of two assembly initiator proteins, it binds directly to the 5'-end of the 23S rRNA, where it nucleates assembly of the 50S subunit.</text>
</comment>
<comment type="subunit">
    <text evidence="1">Part of the 50S ribosomal subunit.</text>
</comment>
<comment type="subcellular location">
    <subcellularLocation>
        <location>Plastid</location>
        <location>Chloroplast</location>
    </subcellularLocation>
</comment>
<comment type="similarity">
    <text evidence="2">Belongs to the universal ribosomal protein uL24 family.</text>
</comment>
<geneLocation type="chloroplast"/>
<feature type="chain" id="PRO_0000355743" description="Large ribosomal subunit protein uL24c">
    <location>
        <begin position="1"/>
        <end position="102"/>
    </location>
</feature>
<gene>
    <name type="primary">rpl24</name>
</gene>
<proteinExistence type="inferred from homology"/>
<protein>
    <recommendedName>
        <fullName evidence="2">Large ribosomal subunit protein uL24c</fullName>
    </recommendedName>
    <alternativeName>
        <fullName>50S ribosomal protein L24, chloroplastic</fullName>
    </alternativeName>
</protein>
<keyword id="KW-0150">Chloroplast</keyword>
<keyword id="KW-0934">Plastid</keyword>
<keyword id="KW-0687">Ribonucleoprotein</keyword>
<keyword id="KW-0689">Ribosomal protein</keyword>
<keyword id="KW-0694">RNA-binding</keyword>
<keyword id="KW-0699">rRNA-binding</keyword>